<feature type="chain" id="PRO_1000056706" description="Protein FdhE homolog">
    <location>
        <begin position="1"/>
        <end position="302"/>
    </location>
</feature>
<proteinExistence type="inferred from homology"/>
<gene>
    <name evidence="1" type="primary">fdhE</name>
    <name type="ordered locus">CGSHiGG_02505</name>
</gene>
<accession>A5UFI3</accession>
<dbReference type="EMBL" id="CP000672">
    <property type="protein sequence ID" value="ABQ99538.1"/>
    <property type="molecule type" value="Genomic_DNA"/>
</dbReference>
<dbReference type="SMR" id="A5UFI3"/>
<dbReference type="KEGG" id="hiq:CGSHiGG_02505"/>
<dbReference type="HOGENOM" id="CLU_055275_0_0_6"/>
<dbReference type="Proteomes" id="UP000001990">
    <property type="component" value="Chromosome"/>
</dbReference>
<dbReference type="GO" id="GO:0005829">
    <property type="term" value="C:cytosol"/>
    <property type="evidence" value="ECO:0007669"/>
    <property type="project" value="TreeGrafter"/>
</dbReference>
<dbReference type="GO" id="GO:0008199">
    <property type="term" value="F:ferric iron binding"/>
    <property type="evidence" value="ECO:0007669"/>
    <property type="project" value="TreeGrafter"/>
</dbReference>
<dbReference type="GO" id="GO:0051604">
    <property type="term" value="P:protein maturation"/>
    <property type="evidence" value="ECO:0007669"/>
    <property type="project" value="TreeGrafter"/>
</dbReference>
<dbReference type="CDD" id="cd16341">
    <property type="entry name" value="FdhE"/>
    <property type="match status" value="1"/>
</dbReference>
<dbReference type="FunFam" id="3.90.1670.10:FF:000001">
    <property type="entry name" value="Protein FdhE"/>
    <property type="match status" value="1"/>
</dbReference>
<dbReference type="Gene3D" id="3.90.1670.10">
    <property type="entry name" value="FdhE-like domain"/>
    <property type="match status" value="1"/>
</dbReference>
<dbReference type="HAMAP" id="MF_00611">
    <property type="entry name" value="FdeH"/>
    <property type="match status" value="1"/>
</dbReference>
<dbReference type="InterPro" id="IPR024064">
    <property type="entry name" value="FdhE-like_sf"/>
</dbReference>
<dbReference type="InterPro" id="IPR056796">
    <property type="entry name" value="FdhE_C"/>
</dbReference>
<dbReference type="InterPro" id="IPR056797">
    <property type="entry name" value="FdhE_central"/>
</dbReference>
<dbReference type="InterPro" id="IPR056774">
    <property type="entry name" value="FdhE_N"/>
</dbReference>
<dbReference type="InterPro" id="IPR006452">
    <property type="entry name" value="Formate_DH_accessory"/>
</dbReference>
<dbReference type="NCBIfam" id="TIGR01562">
    <property type="entry name" value="FdhE"/>
    <property type="match status" value="1"/>
</dbReference>
<dbReference type="NCBIfam" id="NF002925">
    <property type="entry name" value="PRK03564.1"/>
    <property type="match status" value="1"/>
</dbReference>
<dbReference type="PANTHER" id="PTHR37689">
    <property type="entry name" value="PROTEIN FDHE"/>
    <property type="match status" value="1"/>
</dbReference>
<dbReference type="PANTHER" id="PTHR37689:SF1">
    <property type="entry name" value="PROTEIN FDHE"/>
    <property type="match status" value="1"/>
</dbReference>
<dbReference type="Pfam" id="PF24860">
    <property type="entry name" value="FdhE_C"/>
    <property type="match status" value="1"/>
</dbReference>
<dbReference type="Pfam" id="PF24859">
    <property type="entry name" value="FdhE_central"/>
    <property type="match status" value="1"/>
</dbReference>
<dbReference type="Pfam" id="PF04216">
    <property type="entry name" value="FdhE_N"/>
    <property type="match status" value="1"/>
</dbReference>
<dbReference type="PIRSF" id="PIRSF018296">
    <property type="entry name" value="Format_dh_formtn"/>
    <property type="match status" value="1"/>
</dbReference>
<dbReference type="SUPFAM" id="SSF144020">
    <property type="entry name" value="FdhE-like"/>
    <property type="match status" value="1"/>
</dbReference>
<reference key="1">
    <citation type="journal article" date="2007" name="Genome Biol.">
        <title>Characterization and modeling of the Haemophilus influenzae core and supragenomes based on the complete genomic sequences of Rd and 12 clinical nontypeable strains.</title>
        <authorList>
            <person name="Hogg J.S."/>
            <person name="Hu F.Z."/>
            <person name="Janto B."/>
            <person name="Boissy R."/>
            <person name="Hayes J."/>
            <person name="Keefe R."/>
            <person name="Post J.C."/>
            <person name="Ehrlich G.D."/>
        </authorList>
    </citation>
    <scope>NUCLEOTIDE SEQUENCE [LARGE SCALE GENOMIC DNA]</scope>
    <source>
        <strain>PittGG</strain>
    </source>
</reference>
<keyword id="KW-0963">Cytoplasm</keyword>
<organism>
    <name type="scientific">Haemophilus influenzae (strain PittGG)</name>
    <dbReference type="NCBI Taxonomy" id="374931"/>
    <lineage>
        <taxon>Bacteria</taxon>
        <taxon>Pseudomonadati</taxon>
        <taxon>Pseudomonadota</taxon>
        <taxon>Gammaproteobacteria</taxon>
        <taxon>Pasteurellales</taxon>
        <taxon>Pasteurellaceae</taxon>
        <taxon>Haemophilus</taxon>
    </lineage>
</organism>
<name>FDHE_HAEIG</name>
<evidence type="ECO:0000255" key="1">
    <source>
        <dbReference type="HAMAP-Rule" id="MF_00611"/>
    </source>
</evidence>
<sequence>MSIKILSESEIKQVANSYQAPAVLFANPKNLYQRRAKRLRDLAQNHPLSDYLLFAADIVESQLSTLEKNPLPPQQLEQLNAIEPLNTKTFKRDSIWREYLTEILDEIKPKANEQIAATIEFLEKASFAELEEMANKLLTQEFNLVSSDKAVFIWAALSLYWLQAAQQIPHNSQVENTENLHHCPVCGSLPVASIVQIGTSQGLRYLHCNLCESEWNLVRAQCTNCNSHDKLEIWSLNEELALVRAETCGSCESYLKMMFQEKDPYVEPVADDLASIFLDIEMEEKGFARSGLNPFIFPAEEA</sequence>
<protein>
    <recommendedName>
        <fullName evidence="1">Protein FdhE homolog</fullName>
    </recommendedName>
</protein>
<comment type="function">
    <text evidence="1">Necessary for formate dehydrogenase activity.</text>
</comment>
<comment type="subcellular location">
    <subcellularLocation>
        <location evidence="1">Cytoplasm</location>
    </subcellularLocation>
</comment>
<comment type="similarity">
    <text evidence="1">Belongs to the FdhE family.</text>
</comment>